<organism>
    <name type="scientific">Mus musculus</name>
    <name type="common">Mouse</name>
    <dbReference type="NCBI Taxonomy" id="10090"/>
    <lineage>
        <taxon>Eukaryota</taxon>
        <taxon>Metazoa</taxon>
        <taxon>Chordata</taxon>
        <taxon>Craniata</taxon>
        <taxon>Vertebrata</taxon>
        <taxon>Euteleostomi</taxon>
        <taxon>Mammalia</taxon>
        <taxon>Eutheria</taxon>
        <taxon>Euarchontoglires</taxon>
        <taxon>Glires</taxon>
        <taxon>Rodentia</taxon>
        <taxon>Myomorpha</taxon>
        <taxon>Muroidea</taxon>
        <taxon>Muridae</taxon>
        <taxon>Murinae</taxon>
        <taxon>Mus</taxon>
        <taxon>Mus</taxon>
    </lineage>
</organism>
<proteinExistence type="evidence at protein level"/>
<keyword id="KW-0025">Alternative splicing</keyword>
<keyword id="KW-0963">Cytoplasm</keyword>
<keyword id="KW-0489">Methyltransferase</keyword>
<keyword id="KW-1185">Reference proteome</keyword>
<keyword id="KW-0694">RNA-binding</keyword>
<keyword id="KW-0949">S-adenosyl-L-methionine</keyword>
<keyword id="KW-0808">Transferase</keyword>
<keyword id="KW-0819">tRNA processing</keyword>
<keyword id="KW-0820">tRNA-binding</keyword>
<feature type="chain" id="PRO_0000259770" description="tRNA (guanine(6)-N(2))-methyltransferase THUMP3">
    <location>
        <begin position="1"/>
        <end position="505"/>
    </location>
</feature>
<feature type="domain" description="THUMP" evidence="2">
    <location>
        <begin position="171"/>
        <end position="287"/>
    </location>
</feature>
<feature type="region of interest" description="Disordered" evidence="3">
    <location>
        <begin position="145"/>
        <end position="182"/>
    </location>
</feature>
<feature type="compositionally biased region" description="Basic and acidic residues" evidence="3">
    <location>
        <begin position="156"/>
        <end position="173"/>
    </location>
</feature>
<feature type="splice variant" id="VSP_021537" description="In isoform 2." evidence="6">
    <original>MSC</original>
    <variation>MS</variation>
    <location>
        <begin position="1"/>
        <end position="3"/>
    </location>
</feature>
<feature type="splice variant" id="VSP_021538" description="In isoform 3." evidence="7">
    <location>
        <begin position="316"/>
        <end position="505"/>
    </location>
</feature>
<feature type="sequence conflict" description="In Ref. 3; AAH02024/AAH12688." evidence="9" ref="3">
    <original>A</original>
    <variation>T</variation>
    <location>
        <position position="8"/>
    </location>
</feature>
<feature type="sequence conflict" description="In Ref. 2; BAB30650." evidence="9" ref="2">
    <original>T</original>
    <variation>N</variation>
    <location>
        <position position="266"/>
    </location>
</feature>
<feature type="sequence conflict" description="In Ref. 3; AAH02024/AAH12688." evidence="9" ref="3">
    <original>T</original>
    <variation>S</variation>
    <location>
        <position position="380"/>
    </location>
</feature>
<name>THUM3_MOUSE</name>
<comment type="function">
    <text evidence="1">Catalytic subunit of the THUMPD3-TRM112 methyltransferase complex, that specifically mediates the S-adenosyl-L-methionine-dependent N(2)-methylation of guanosine nucleotide at position 6 (m2G6) in tRNAs. This is one of the major tRNA (guanine-N(2))-methyltransferases. Also catalyzes the S-adenosyl-L-methionine-dependent N(2)-methylation of guanosine nucleotide at position 7 of tRNA(Trp).</text>
</comment>
<comment type="catalytic activity">
    <reaction evidence="1">
        <text>guanosine(6) in tRNA + S-adenosyl-L-methionine = N(2)-methylguanosine(6) in tRNA + S-adenosyl-L-homocysteine + H(+)</text>
        <dbReference type="Rhea" id="RHEA:51116"/>
        <dbReference type="Rhea" id="RHEA-COMP:12888"/>
        <dbReference type="Rhea" id="RHEA-COMP:12889"/>
        <dbReference type="ChEBI" id="CHEBI:15378"/>
        <dbReference type="ChEBI" id="CHEBI:57856"/>
        <dbReference type="ChEBI" id="CHEBI:59789"/>
        <dbReference type="ChEBI" id="CHEBI:74269"/>
        <dbReference type="ChEBI" id="CHEBI:74481"/>
        <dbReference type="EC" id="2.1.1.256"/>
    </reaction>
</comment>
<comment type="catalytic activity">
    <reaction evidence="1">
        <text>guanosine(7) in tRNA + S-adenosyl-L-methionine = N(2)-methylguanosine(7) in tRNA + S-adenosyl-L-homocysteine + H(+)</text>
        <dbReference type="Rhea" id="RHEA:83419"/>
        <dbReference type="Rhea" id="RHEA-COMP:20126"/>
        <dbReference type="Rhea" id="RHEA-COMP:20127"/>
        <dbReference type="ChEBI" id="CHEBI:15378"/>
        <dbReference type="ChEBI" id="CHEBI:57856"/>
        <dbReference type="ChEBI" id="CHEBI:59789"/>
        <dbReference type="ChEBI" id="CHEBI:74269"/>
        <dbReference type="ChEBI" id="CHEBI:74481"/>
    </reaction>
    <physiologicalReaction direction="left-to-right" evidence="1">
        <dbReference type="Rhea" id="RHEA:83420"/>
    </physiologicalReaction>
</comment>
<comment type="subunit">
    <text evidence="1">Part of the heterodimeric THUMPD3-TRM112 methyltransferase complex; this complex forms an active tRNA methyltransferase, where TRMT112 acts as an activator of the catalytic subunit THUMPD3.</text>
</comment>
<comment type="subcellular location">
    <subcellularLocation>
        <location evidence="1">Cytoplasm</location>
    </subcellularLocation>
</comment>
<comment type="alternative products">
    <event type="alternative splicing"/>
    <isoform>
        <id>P97770-1</id>
        <name>1</name>
        <sequence type="displayed"/>
    </isoform>
    <isoform>
        <id>P97770-2</id>
        <name>2</name>
        <sequence type="described" ref="VSP_021537"/>
    </isoform>
    <isoform>
        <id>P97770-3</id>
        <name>3</name>
        <sequence type="described" ref="VSP_021538"/>
    </isoform>
</comment>
<comment type="tissue specificity">
    <text evidence="4 5">Ubiquitously expressed (PubMed:9108056). Abundantly expressed in the testis, also expressed in the brain, heart, kidney, liver, lung, muscle and spleen (PubMed:34669960).</text>
</comment>
<comment type="similarity">
    <text evidence="9">Belongs to the methyltransferase superfamily.</text>
</comment>
<evidence type="ECO:0000250" key="1">
    <source>
        <dbReference type="UniProtKB" id="Q9BV44"/>
    </source>
</evidence>
<evidence type="ECO:0000255" key="2">
    <source>
        <dbReference type="PROSITE-ProRule" id="PRU00529"/>
    </source>
</evidence>
<evidence type="ECO:0000256" key="3">
    <source>
        <dbReference type="SAM" id="MobiDB-lite"/>
    </source>
</evidence>
<evidence type="ECO:0000269" key="4">
    <source>
    </source>
</evidence>
<evidence type="ECO:0000269" key="5">
    <source>
    </source>
</evidence>
<evidence type="ECO:0000303" key="6">
    <source>
    </source>
</evidence>
<evidence type="ECO:0000303" key="7">
    <source>
    </source>
</evidence>
<evidence type="ECO:0000303" key="8">
    <source>
    </source>
</evidence>
<evidence type="ECO:0000305" key="9"/>
<evidence type="ECO:0000312" key="10">
    <source>
        <dbReference type="MGI" id="MGI:1277973"/>
    </source>
</evidence>
<gene>
    <name evidence="10" type="primary">Thumpd3</name>
</gene>
<accession>P97770</accession>
<accession>Q99M45</accession>
<accession>Q9D3P0</accession>
<reference key="1">
    <citation type="journal article" date="1997" name="Proc. Natl. Acad. Sci. U.S.A.">
        <title>Disruption of overlapping transcripts in the ROSA beta geo 26 gene trap strain leads to widespread expression of beta-galactosidase in mouse embryos and hematopoietic cells.</title>
        <authorList>
            <person name="Zambrowicz B.P."/>
            <person name="Imamoto A."/>
            <person name="Fiering S."/>
            <person name="Herzenberg L.A."/>
            <person name="Kerr W.G."/>
            <person name="Soriano P."/>
        </authorList>
    </citation>
    <scope>NUCLEOTIDE SEQUENCE [MRNA] (ISOFORM 1)</scope>
    <scope>TISSUE SPECIFICITY</scope>
</reference>
<reference key="2">
    <citation type="journal article" date="2005" name="Science">
        <title>The transcriptional landscape of the mammalian genome.</title>
        <authorList>
            <person name="Carninci P."/>
            <person name="Kasukawa T."/>
            <person name="Katayama S."/>
            <person name="Gough J."/>
            <person name="Frith M.C."/>
            <person name="Maeda N."/>
            <person name="Oyama R."/>
            <person name="Ravasi T."/>
            <person name="Lenhard B."/>
            <person name="Wells C."/>
            <person name="Kodzius R."/>
            <person name="Shimokawa K."/>
            <person name="Bajic V.B."/>
            <person name="Brenner S.E."/>
            <person name="Batalov S."/>
            <person name="Forrest A.R."/>
            <person name="Zavolan M."/>
            <person name="Davis M.J."/>
            <person name="Wilming L.G."/>
            <person name="Aidinis V."/>
            <person name="Allen J.E."/>
            <person name="Ambesi-Impiombato A."/>
            <person name="Apweiler R."/>
            <person name="Aturaliya R.N."/>
            <person name="Bailey T.L."/>
            <person name="Bansal M."/>
            <person name="Baxter L."/>
            <person name="Beisel K.W."/>
            <person name="Bersano T."/>
            <person name="Bono H."/>
            <person name="Chalk A.M."/>
            <person name="Chiu K.P."/>
            <person name="Choudhary V."/>
            <person name="Christoffels A."/>
            <person name="Clutterbuck D.R."/>
            <person name="Crowe M.L."/>
            <person name="Dalla E."/>
            <person name="Dalrymple B.P."/>
            <person name="de Bono B."/>
            <person name="Della Gatta G."/>
            <person name="di Bernardo D."/>
            <person name="Down T."/>
            <person name="Engstrom P."/>
            <person name="Fagiolini M."/>
            <person name="Faulkner G."/>
            <person name="Fletcher C.F."/>
            <person name="Fukushima T."/>
            <person name="Furuno M."/>
            <person name="Futaki S."/>
            <person name="Gariboldi M."/>
            <person name="Georgii-Hemming P."/>
            <person name="Gingeras T.R."/>
            <person name="Gojobori T."/>
            <person name="Green R.E."/>
            <person name="Gustincich S."/>
            <person name="Harbers M."/>
            <person name="Hayashi Y."/>
            <person name="Hensch T.K."/>
            <person name="Hirokawa N."/>
            <person name="Hill D."/>
            <person name="Huminiecki L."/>
            <person name="Iacono M."/>
            <person name="Ikeo K."/>
            <person name="Iwama A."/>
            <person name="Ishikawa T."/>
            <person name="Jakt M."/>
            <person name="Kanapin A."/>
            <person name="Katoh M."/>
            <person name="Kawasawa Y."/>
            <person name="Kelso J."/>
            <person name="Kitamura H."/>
            <person name="Kitano H."/>
            <person name="Kollias G."/>
            <person name="Krishnan S.P."/>
            <person name="Kruger A."/>
            <person name="Kummerfeld S.K."/>
            <person name="Kurochkin I.V."/>
            <person name="Lareau L.F."/>
            <person name="Lazarevic D."/>
            <person name="Lipovich L."/>
            <person name="Liu J."/>
            <person name="Liuni S."/>
            <person name="McWilliam S."/>
            <person name="Madan Babu M."/>
            <person name="Madera M."/>
            <person name="Marchionni L."/>
            <person name="Matsuda H."/>
            <person name="Matsuzawa S."/>
            <person name="Miki H."/>
            <person name="Mignone F."/>
            <person name="Miyake S."/>
            <person name="Morris K."/>
            <person name="Mottagui-Tabar S."/>
            <person name="Mulder N."/>
            <person name="Nakano N."/>
            <person name="Nakauchi H."/>
            <person name="Ng P."/>
            <person name="Nilsson R."/>
            <person name="Nishiguchi S."/>
            <person name="Nishikawa S."/>
            <person name="Nori F."/>
            <person name="Ohara O."/>
            <person name="Okazaki Y."/>
            <person name="Orlando V."/>
            <person name="Pang K.C."/>
            <person name="Pavan W.J."/>
            <person name="Pavesi G."/>
            <person name="Pesole G."/>
            <person name="Petrovsky N."/>
            <person name="Piazza S."/>
            <person name="Reed J."/>
            <person name="Reid J.F."/>
            <person name="Ring B.Z."/>
            <person name="Ringwald M."/>
            <person name="Rost B."/>
            <person name="Ruan Y."/>
            <person name="Salzberg S.L."/>
            <person name="Sandelin A."/>
            <person name="Schneider C."/>
            <person name="Schoenbach C."/>
            <person name="Sekiguchi K."/>
            <person name="Semple C.A."/>
            <person name="Seno S."/>
            <person name="Sessa L."/>
            <person name="Sheng Y."/>
            <person name="Shibata Y."/>
            <person name="Shimada H."/>
            <person name="Shimada K."/>
            <person name="Silva D."/>
            <person name="Sinclair B."/>
            <person name="Sperling S."/>
            <person name="Stupka E."/>
            <person name="Sugiura K."/>
            <person name="Sultana R."/>
            <person name="Takenaka Y."/>
            <person name="Taki K."/>
            <person name="Tammoja K."/>
            <person name="Tan S.L."/>
            <person name="Tang S."/>
            <person name="Taylor M.S."/>
            <person name="Tegner J."/>
            <person name="Teichmann S.A."/>
            <person name="Ueda H.R."/>
            <person name="van Nimwegen E."/>
            <person name="Verardo R."/>
            <person name="Wei C.L."/>
            <person name="Yagi K."/>
            <person name="Yamanishi H."/>
            <person name="Zabarovsky E."/>
            <person name="Zhu S."/>
            <person name="Zimmer A."/>
            <person name="Hide W."/>
            <person name="Bult C."/>
            <person name="Grimmond S.M."/>
            <person name="Teasdale R.D."/>
            <person name="Liu E.T."/>
            <person name="Brusic V."/>
            <person name="Quackenbush J."/>
            <person name="Wahlestedt C."/>
            <person name="Mattick J.S."/>
            <person name="Hume D.A."/>
            <person name="Kai C."/>
            <person name="Sasaki D."/>
            <person name="Tomaru Y."/>
            <person name="Fukuda S."/>
            <person name="Kanamori-Katayama M."/>
            <person name="Suzuki M."/>
            <person name="Aoki J."/>
            <person name="Arakawa T."/>
            <person name="Iida J."/>
            <person name="Imamura K."/>
            <person name="Itoh M."/>
            <person name="Kato T."/>
            <person name="Kawaji H."/>
            <person name="Kawagashira N."/>
            <person name="Kawashima T."/>
            <person name="Kojima M."/>
            <person name="Kondo S."/>
            <person name="Konno H."/>
            <person name="Nakano K."/>
            <person name="Ninomiya N."/>
            <person name="Nishio T."/>
            <person name="Okada M."/>
            <person name="Plessy C."/>
            <person name="Shibata K."/>
            <person name="Shiraki T."/>
            <person name="Suzuki S."/>
            <person name="Tagami M."/>
            <person name="Waki K."/>
            <person name="Watahiki A."/>
            <person name="Okamura-Oho Y."/>
            <person name="Suzuki H."/>
            <person name="Kawai J."/>
            <person name="Hayashizaki Y."/>
        </authorList>
    </citation>
    <scope>NUCLEOTIDE SEQUENCE [LARGE SCALE MRNA] (ISOFORMS 1 AND 3)</scope>
    <source>
        <strain>C57BL/6J</strain>
        <tissue>Eye</tissue>
        <tissue>Head</tissue>
    </source>
</reference>
<reference key="3">
    <citation type="journal article" date="2004" name="Genome Res.">
        <title>The status, quality, and expansion of the NIH full-length cDNA project: the Mammalian Gene Collection (MGC).</title>
        <authorList>
            <consortium name="The MGC Project Team"/>
        </authorList>
    </citation>
    <scope>NUCLEOTIDE SEQUENCE [LARGE SCALE MRNA] (ISOFORM 2)</scope>
    <source>
        <strain>C57BL/6J</strain>
        <strain>Czech II</strain>
        <tissue>Brain</tissue>
        <tissue>Mammary gland</tissue>
    </source>
</reference>
<reference key="4">
    <citation type="journal article" date="2010" name="Cell">
        <title>A tissue-specific atlas of mouse protein phosphorylation and expression.</title>
        <authorList>
            <person name="Huttlin E.L."/>
            <person name="Jedrychowski M.P."/>
            <person name="Elias J.E."/>
            <person name="Goswami T."/>
            <person name="Rad R."/>
            <person name="Beausoleil S.A."/>
            <person name="Villen J."/>
            <person name="Haas W."/>
            <person name="Sowa M.E."/>
            <person name="Gygi S.P."/>
        </authorList>
    </citation>
    <scope>IDENTIFICATION BY MASS SPECTROMETRY [LARGE SCALE ANALYSIS]</scope>
    <source>
        <tissue>Spleen</tissue>
        <tissue>Testis</tissue>
    </source>
</reference>
<reference key="5">
    <citation type="journal article" date="2021" name="Nucleic Acids Res.">
        <title>THUMPD3-TRMT112 is a m2G methyltransferase working on a broad range of tRNA substrates.</title>
        <authorList>
            <person name="Yang W.Q."/>
            <person name="Xiong Q.P."/>
            <person name="Ge J.Y."/>
            <person name="Li H."/>
            <person name="Zhu W.Y."/>
            <person name="Nie Y."/>
            <person name="Lin X."/>
            <person name="Lv D."/>
            <person name="Li J."/>
            <person name="Lin H."/>
            <person name="Liu R.J."/>
        </authorList>
    </citation>
    <scope>TISSUE SPECIFICITY</scope>
</reference>
<sequence length="505" mass="56431">MSCDTQEATRECLGMNLDGNKEPVSLVESGVRSESEHLQVTIGATVPTGFEQTAAGEVREKLKSACRISKDRGKIYFDIAVESLAQVHCLRSVDNLFVVVQEFKDYQFKDTKEEVLRDFEELAGKLPWSDPLKVWQINTTFKKKKAKRRKANQSAGKEKADCGQGDKADEKDGKKKHASSTSDSHILDYYENPAIKEEISTLVGDVLSSCKDETGQSLREETEPQVQKFRVTCNRAGEKHCFTSNEAARDFGGAIQEYFKWKADMTNFDVEVLLNIHDNEVIVAIALTEESLHRRNITHFGPTTLRSTLAYGMLRLCEPKPTDVIVDPMCGTGAIPIEGATEWSHCYHIAGDNNPLAVNRAANNISSLLTKSQIKDGKTTWGLPIDAVQWDICNLPLRTASVDIIVTDMPFGKRMGSKKRNWNLYPACLREMSRVCRPGTGRAVLLTQDKKCFTKALSGMGHVWRKVHVVWVNIGGLHAAVYLLKRTAQAFVHPSDQDEGRDPPW</sequence>
<protein>
    <recommendedName>
        <fullName evidence="1">tRNA (guanine(6)-N(2))-methyltransferase THUMP3</fullName>
        <ecNumber evidence="1">2.1.1.256</ecNumber>
    </recommendedName>
    <alternativeName>
        <fullName evidence="10">GtROSA26asSor</fullName>
    </alternativeName>
    <alternativeName>
        <fullName evidence="8 10">THUMP domain-containing protein 3</fullName>
    </alternativeName>
    <alternativeName>
        <fullName evidence="1">tRNA(Trp) (guanine(7)-N(2))-methyltransferase THUMP3</fullName>
        <ecNumber evidence="1">2.1.1.-</ecNumber>
    </alternativeName>
</protein>
<dbReference type="EC" id="2.1.1.256" evidence="1"/>
<dbReference type="EC" id="2.1.1.-" evidence="1"/>
<dbReference type="EMBL" id="U83176">
    <property type="protein sequence ID" value="AAC60384.1"/>
    <property type="molecule type" value="mRNA"/>
</dbReference>
<dbReference type="EMBL" id="AK017246">
    <property type="protein sequence ID" value="BAB30650.1"/>
    <property type="molecule type" value="mRNA"/>
</dbReference>
<dbReference type="EMBL" id="AK142140">
    <property type="protein sequence ID" value="BAE24945.1"/>
    <property type="molecule type" value="mRNA"/>
</dbReference>
<dbReference type="EMBL" id="BC002024">
    <property type="protein sequence ID" value="AAH02024.1"/>
    <property type="molecule type" value="mRNA"/>
</dbReference>
<dbReference type="EMBL" id="BC012688">
    <property type="protein sequence ID" value="AAH12688.1"/>
    <property type="molecule type" value="mRNA"/>
</dbReference>
<dbReference type="EMBL" id="BC046800">
    <property type="protein sequence ID" value="AAH46800.1"/>
    <property type="molecule type" value="mRNA"/>
</dbReference>
<dbReference type="CCDS" id="CCDS20410.1">
    <molecule id="P97770-1"/>
</dbReference>
<dbReference type="RefSeq" id="NP_001342195.1">
    <molecule id="P97770-1"/>
    <property type="nucleotide sequence ID" value="NM_001355266.2"/>
</dbReference>
<dbReference type="RefSeq" id="NP_001396883.1">
    <molecule id="P97770-1"/>
    <property type="nucleotide sequence ID" value="NM_001409954.1"/>
</dbReference>
<dbReference type="RefSeq" id="NP_001396884.1">
    <molecule id="P97770-1"/>
    <property type="nucleotide sequence ID" value="NM_001409955.1"/>
</dbReference>
<dbReference type="RefSeq" id="NP_032214.1">
    <molecule id="P97770-1"/>
    <property type="nucleotide sequence ID" value="NM_008188.4"/>
</dbReference>
<dbReference type="RefSeq" id="XP_006505640.1">
    <property type="nucleotide sequence ID" value="XM_006505577.3"/>
</dbReference>
<dbReference type="RefSeq" id="XP_006505641.1">
    <property type="nucleotide sequence ID" value="XM_006505578.2"/>
</dbReference>
<dbReference type="RefSeq" id="XP_006505642.1">
    <property type="nucleotide sequence ID" value="XM_006505579.1"/>
</dbReference>
<dbReference type="RefSeq" id="XP_036021758.1">
    <molecule id="P97770-1"/>
    <property type="nucleotide sequence ID" value="XM_036165865.1"/>
</dbReference>
<dbReference type="SMR" id="P97770"/>
<dbReference type="BioGRID" id="200120">
    <property type="interactions" value="2"/>
</dbReference>
<dbReference type="FunCoup" id="P97770">
    <property type="interactions" value="3726"/>
</dbReference>
<dbReference type="IntAct" id="P97770">
    <property type="interactions" value="1"/>
</dbReference>
<dbReference type="STRING" id="10090.ENSMUSP00000032398"/>
<dbReference type="iPTMnet" id="P97770"/>
<dbReference type="PhosphoSitePlus" id="P97770"/>
<dbReference type="SwissPalm" id="P97770"/>
<dbReference type="PaxDb" id="10090-ENSMUSP00000032398"/>
<dbReference type="PeptideAtlas" id="P97770"/>
<dbReference type="ProteomicsDB" id="262983">
    <molecule id="P97770-1"/>
</dbReference>
<dbReference type="ProteomicsDB" id="262984">
    <molecule id="P97770-2"/>
</dbReference>
<dbReference type="ProteomicsDB" id="262985">
    <molecule id="P97770-3"/>
</dbReference>
<dbReference type="Pumba" id="P97770"/>
<dbReference type="Antibodypedia" id="25366">
    <property type="antibodies" value="136 antibodies from 26 providers"/>
</dbReference>
<dbReference type="DNASU" id="14911"/>
<dbReference type="Ensembl" id="ENSMUST00000032398.15">
    <molecule id="P97770-1"/>
    <property type="protein sequence ID" value="ENSMUSP00000032398.9"/>
    <property type="gene ID" value="ENSMUSG00000030264.15"/>
</dbReference>
<dbReference type="GeneID" id="14911"/>
<dbReference type="KEGG" id="mmu:14911"/>
<dbReference type="UCSC" id="uc009dek.1">
    <molecule id="P97770-1"/>
    <property type="organism name" value="mouse"/>
</dbReference>
<dbReference type="AGR" id="MGI:1277973"/>
<dbReference type="CTD" id="25917"/>
<dbReference type="MGI" id="MGI:1277973">
    <property type="gene designation" value="Thumpd3"/>
</dbReference>
<dbReference type="VEuPathDB" id="HostDB:ENSMUSG00000030264"/>
<dbReference type="eggNOG" id="ENOG502QSE5">
    <property type="taxonomic scope" value="Eukaryota"/>
</dbReference>
<dbReference type="GeneTree" id="ENSGT00530000063557"/>
<dbReference type="HOGENOM" id="CLU_045692_0_0_1"/>
<dbReference type="InParanoid" id="P97770"/>
<dbReference type="OMA" id="PIDAIQW"/>
<dbReference type="OrthoDB" id="47730at2759"/>
<dbReference type="PhylomeDB" id="P97770"/>
<dbReference type="TreeFam" id="TF313093"/>
<dbReference type="BioGRID-ORCS" id="14911">
    <property type="hits" value="1 hit in 76 CRISPR screens"/>
</dbReference>
<dbReference type="PRO" id="PR:P97770"/>
<dbReference type="Proteomes" id="UP000000589">
    <property type="component" value="Chromosome 6"/>
</dbReference>
<dbReference type="RNAct" id="P97770">
    <property type="molecule type" value="protein"/>
</dbReference>
<dbReference type="Bgee" id="ENSMUSG00000030264">
    <property type="expression patterns" value="Expressed in choroid plexus epithelium and 272 other cell types or tissues"/>
</dbReference>
<dbReference type="ExpressionAtlas" id="P97770">
    <property type="expression patterns" value="baseline and differential"/>
</dbReference>
<dbReference type="GO" id="GO:0005737">
    <property type="term" value="C:cytoplasm"/>
    <property type="evidence" value="ECO:0000250"/>
    <property type="project" value="UniProtKB"/>
</dbReference>
<dbReference type="GO" id="GO:0005829">
    <property type="term" value="C:cytosol"/>
    <property type="evidence" value="ECO:0007669"/>
    <property type="project" value="Ensembl"/>
</dbReference>
<dbReference type="GO" id="GO:0005730">
    <property type="term" value="C:nucleolus"/>
    <property type="evidence" value="ECO:0007669"/>
    <property type="project" value="Ensembl"/>
</dbReference>
<dbReference type="GO" id="GO:0043527">
    <property type="term" value="C:tRNA methyltransferase complex"/>
    <property type="evidence" value="ECO:0007669"/>
    <property type="project" value="Ensembl"/>
</dbReference>
<dbReference type="GO" id="GO:0160117">
    <property type="term" value="F:tRNA (guanine(6)-N2)-methyltransferase activity"/>
    <property type="evidence" value="ECO:0000250"/>
    <property type="project" value="UniProtKB"/>
</dbReference>
<dbReference type="GO" id="GO:0160118">
    <property type="term" value="F:tRNA (guanine(7)-N2)-methyltransferase activity"/>
    <property type="evidence" value="ECO:0007669"/>
    <property type="project" value="Ensembl"/>
</dbReference>
<dbReference type="GO" id="GO:0000049">
    <property type="term" value="F:tRNA binding"/>
    <property type="evidence" value="ECO:0007669"/>
    <property type="project" value="UniProtKB-KW"/>
</dbReference>
<dbReference type="GO" id="GO:0030488">
    <property type="term" value="P:tRNA methylation"/>
    <property type="evidence" value="ECO:0007669"/>
    <property type="project" value="Ensembl"/>
</dbReference>
<dbReference type="CDD" id="cd11715">
    <property type="entry name" value="THUMP_AdoMetMT"/>
    <property type="match status" value="1"/>
</dbReference>
<dbReference type="FunFam" id="3.40.50.150:FF:000073">
    <property type="entry name" value="THUMP domain containing 3"/>
    <property type="match status" value="1"/>
</dbReference>
<dbReference type="FunFam" id="3.30.2130.30:FF:000004">
    <property type="entry name" value="THUMP domain-containing protein 3 isoform X1"/>
    <property type="match status" value="1"/>
</dbReference>
<dbReference type="FunFam" id="3.30.2130.30:FF:000007">
    <property type="entry name" value="THUMP domain-containing protein 3 isoform X1"/>
    <property type="match status" value="1"/>
</dbReference>
<dbReference type="Gene3D" id="3.30.2130.30">
    <property type="match status" value="2"/>
</dbReference>
<dbReference type="Gene3D" id="3.40.50.150">
    <property type="entry name" value="Vaccinia Virus protein VP39"/>
    <property type="match status" value="1"/>
</dbReference>
<dbReference type="InterPro" id="IPR000241">
    <property type="entry name" value="RlmKL-like_Mtase"/>
</dbReference>
<dbReference type="InterPro" id="IPR053943">
    <property type="entry name" value="RlmKL-like_Mtase_CS"/>
</dbReference>
<dbReference type="InterPro" id="IPR029063">
    <property type="entry name" value="SAM-dependent_MTases_sf"/>
</dbReference>
<dbReference type="InterPro" id="IPR004114">
    <property type="entry name" value="THUMP_dom"/>
</dbReference>
<dbReference type="PANTHER" id="PTHR14911">
    <property type="entry name" value="THUMP DOMAIN-CONTAINING"/>
    <property type="match status" value="1"/>
</dbReference>
<dbReference type="PANTHER" id="PTHR14911:SF13">
    <property type="entry name" value="TRNA (GUANINE(6)-N2)-METHYLTRANSFERASE THUMP3"/>
    <property type="match status" value="1"/>
</dbReference>
<dbReference type="Pfam" id="PF02926">
    <property type="entry name" value="THUMP"/>
    <property type="match status" value="1"/>
</dbReference>
<dbReference type="Pfam" id="PF01170">
    <property type="entry name" value="UPF0020"/>
    <property type="match status" value="1"/>
</dbReference>
<dbReference type="SMART" id="SM00981">
    <property type="entry name" value="THUMP"/>
    <property type="match status" value="1"/>
</dbReference>
<dbReference type="SUPFAM" id="SSF53335">
    <property type="entry name" value="S-adenosyl-L-methionine-dependent methyltransferases"/>
    <property type="match status" value="1"/>
</dbReference>
<dbReference type="SUPFAM" id="SSF143437">
    <property type="entry name" value="THUMP domain-like"/>
    <property type="match status" value="1"/>
</dbReference>
<dbReference type="PROSITE" id="PS51165">
    <property type="entry name" value="THUMP"/>
    <property type="match status" value="1"/>
</dbReference>
<dbReference type="PROSITE" id="PS01261">
    <property type="entry name" value="UPF0020"/>
    <property type="match status" value="1"/>
</dbReference>